<proteinExistence type="inferred from homology"/>
<reference key="1">
    <citation type="journal article" date="2009" name="Proc. Natl. Acad. Sci. U.S.A.">
        <title>Biogeography of the Sulfolobus islandicus pan-genome.</title>
        <authorList>
            <person name="Reno M.L."/>
            <person name="Held N.L."/>
            <person name="Fields C.J."/>
            <person name="Burke P.V."/>
            <person name="Whitaker R.J."/>
        </authorList>
    </citation>
    <scope>NUCLEOTIDE SEQUENCE [LARGE SCALE GENOMIC DNA]</scope>
    <source>
        <strain>M.16.27</strain>
    </source>
</reference>
<dbReference type="EMBL" id="CP001401">
    <property type="protein sequence ID" value="ACP55353.1"/>
    <property type="molecule type" value="Genomic_DNA"/>
</dbReference>
<dbReference type="SMR" id="C3N5S8"/>
<dbReference type="KEGG" id="sim:M1627_1471"/>
<dbReference type="HOGENOM" id="CLU_026535_0_0_2"/>
<dbReference type="Proteomes" id="UP000002307">
    <property type="component" value="Chromosome"/>
</dbReference>
<dbReference type="GO" id="GO:1990904">
    <property type="term" value="C:ribonucleoprotein complex"/>
    <property type="evidence" value="ECO:0007669"/>
    <property type="project" value="UniProtKB-KW"/>
</dbReference>
<dbReference type="GO" id="GO:0005840">
    <property type="term" value="C:ribosome"/>
    <property type="evidence" value="ECO:0007669"/>
    <property type="project" value="UniProtKB-KW"/>
</dbReference>
<dbReference type="GO" id="GO:0019843">
    <property type="term" value="F:rRNA binding"/>
    <property type="evidence" value="ECO:0007669"/>
    <property type="project" value="UniProtKB-UniRule"/>
</dbReference>
<dbReference type="GO" id="GO:0003735">
    <property type="term" value="F:structural constituent of ribosome"/>
    <property type="evidence" value="ECO:0007669"/>
    <property type="project" value="InterPro"/>
</dbReference>
<dbReference type="GO" id="GO:0006412">
    <property type="term" value="P:translation"/>
    <property type="evidence" value="ECO:0007669"/>
    <property type="project" value="UniProtKB-UniRule"/>
</dbReference>
<dbReference type="FunFam" id="3.40.1370.10:FF:000011">
    <property type="entry name" value="50S ribosomal protein L4"/>
    <property type="match status" value="1"/>
</dbReference>
<dbReference type="Gene3D" id="3.40.1370.10">
    <property type="match status" value="1"/>
</dbReference>
<dbReference type="HAMAP" id="MF_01328_A">
    <property type="entry name" value="Ribosomal_uL4_A"/>
    <property type="match status" value="1"/>
</dbReference>
<dbReference type="InterPro" id="IPR002136">
    <property type="entry name" value="Ribosomal_uL4"/>
</dbReference>
<dbReference type="InterPro" id="IPR023574">
    <property type="entry name" value="Ribosomal_uL4_dom_sf"/>
</dbReference>
<dbReference type="InterPro" id="IPR013000">
    <property type="entry name" value="Ribosomal_uL4_euk/arc_CS"/>
</dbReference>
<dbReference type="InterPro" id="IPR045240">
    <property type="entry name" value="Ribosomal_uL4_euk/arch"/>
</dbReference>
<dbReference type="InterPro" id="IPR019970">
    <property type="entry name" value="Ribosomall_uL4-arc"/>
</dbReference>
<dbReference type="NCBIfam" id="TIGR03672">
    <property type="entry name" value="rpl4p_arch"/>
    <property type="match status" value="1"/>
</dbReference>
<dbReference type="PANTHER" id="PTHR19431">
    <property type="entry name" value="60S RIBOSOMAL PROTEIN L4"/>
    <property type="match status" value="1"/>
</dbReference>
<dbReference type="Pfam" id="PF00573">
    <property type="entry name" value="Ribosomal_L4"/>
    <property type="match status" value="1"/>
</dbReference>
<dbReference type="SUPFAM" id="SSF52166">
    <property type="entry name" value="Ribosomal protein L4"/>
    <property type="match status" value="1"/>
</dbReference>
<dbReference type="PROSITE" id="PS00939">
    <property type="entry name" value="RIBOSOMAL_L1E"/>
    <property type="match status" value="1"/>
</dbReference>
<comment type="function">
    <text evidence="1">One of the primary rRNA binding proteins, this protein initially binds near the 5'-end of the 23S rRNA. It is important during the early stages of 50S assembly. It makes multiple contacts with different domains of the 23S rRNA in the assembled 50S subunit and ribosome.</text>
</comment>
<comment type="function">
    <text evidence="1">Forms part of the polypeptide exit tunnel.</text>
</comment>
<comment type="subunit">
    <text evidence="1">Part of the 50S ribosomal subunit.</text>
</comment>
<comment type="similarity">
    <text evidence="1">Belongs to the universal ribosomal protein uL4 family.</text>
</comment>
<gene>
    <name evidence="1" type="primary">rpl4</name>
    <name type="ordered locus">M1627_1471</name>
</gene>
<evidence type="ECO:0000255" key="1">
    <source>
        <dbReference type="HAMAP-Rule" id="MF_01328"/>
    </source>
</evidence>
<evidence type="ECO:0000305" key="2"/>
<feature type="chain" id="PRO_1000214584" description="Large ribosomal subunit protein uL4">
    <location>
        <begin position="1"/>
        <end position="267"/>
    </location>
</feature>
<name>RL4_SACI3</name>
<protein>
    <recommendedName>
        <fullName evidence="1">Large ribosomal subunit protein uL4</fullName>
    </recommendedName>
    <alternativeName>
        <fullName evidence="2">50S ribosomal protein L4</fullName>
    </alternativeName>
</protein>
<keyword id="KW-0687">Ribonucleoprotein</keyword>
<keyword id="KW-0689">Ribosomal protein</keyword>
<keyword id="KW-0694">RNA-binding</keyword>
<keyword id="KW-0699">rRNA-binding</keyword>
<accession>C3N5S8</accession>
<organism>
    <name type="scientific">Saccharolobus islandicus (strain M.16.27)</name>
    <name type="common">Sulfolobus islandicus</name>
    <dbReference type="NCBI Taxonomy" id="427318"/>
    <lineage>
        <taxon>Archaea</taxon>
        <taxon>Thermoproteota</taxon>
        <taxon>Thermoprotei</taxon>
        <taxon>Sulfolobales</taxon>
        <taxon>Sulfolobaceae</taxon>
        <taxon>Saccharolobus</taxon>
    </lineage>
</organism>
<sequence>MYLELVKKNSVILDKDGNKVKEVELPFIFSFPVRKDIIRRVFLAEFTHSLQPKGRDPMAGKRTSAESFGINLGMARVPRVKNSGEAALAPNTVGGRLTFPPSVDKKLVEEVNDKEKQLAVISALSATADTVFVKARGHVFKDSVSFPIVVTDDIVSLKTASEVEEFLEKIGVYDDVKRVKERIRIRAGKGKMRGRKYKEPIGPLIIVHDSNSPIVKAARNIAGVDVVNAKDVSVIHLAPGAHPGRLTIYTETSIKILDERLSKRLVS</sequence>